<comment type="function">
    <text evidence="1">In muscle, parvalbumin is thought to be involved in relaxation after contraction. It binds two calcium ions (By similarity).</text>
</comment>
<comment type="similarity">
    <text evidence="4">Belongs to the parvalbumin family.</text>
</comment>
<proteinExistence type="inferred from homology"/>
<dbReference type="EMBL" id="AF180888">
    <property type="protein sequence ID" value="AAF78471.1"/>
    <property type="molecule type" value="mRNA"/>
</dbReference>
<dbReference type="EMBL" id="BC093135">
    <property type="protein sequence ID" value="AAH93135.1"/>
    <property type="molecule type" value="mRNA"/>
</dbReference>
<dbReference type="RefSeq" id="NP_571591.1">
    <property type="nucleotide sequence ID" value="NM_131516.2"/>
</dbReference>
<dbReference type="SMR" id="Q9I8V0"/>
<dbReference type="BioGRID" id="79026">
    <property type="interactions" value="1"/>
</dbReference>
<dbReference type="FunCoup" id="Q9I8V0">
    <property type="interactions" value="6"/>
</dbReference>
<dbReference type="STRING" id="7955.ENSDARP00000020027"/>
<dbReference type="PaxDb" id="7955-ENSDARP00000115580"/>
<dbReference type="Ensembl" id="ENSDART00000010144">
    <property type="protein sequence ID" value="ENSDARP00000020027"/>
    <property type="gene ID" value="ENSDARG00000002768"/>
</dbReference>
<dbReference type="Ensembl" id="ENSDART00000143534">
    <property type="protein sequence ID" value="ENSDARP00000115580"/>
    <property type="gene ID" value="ENSDARG00000002768"/>
</dbReference>
<dbReference type="Ensembl" id="ENSDART00000181742">
    <property type="protein sequence ID" value="ENSDARP00000149083"/>
    <property type="gene ID" value="ENSDARG00000114085"/>
</dbReference>
<dbReference type="GeneID" id="58028"/>
<dbReference type="KEGG" id="dre:58028"/>
<dbReference type="AGR" id="ZFIN:ZDB-GENE-000322-4"/>
<dbReference type="CTD" id="58028"/>
<dbReference type="ZFIN" id="ZDB-GENE-000322-4">
    <property type="gene designation" value="pvalb2"/>
</dbReference>
<dbReference type="eggNOG" id="KOG0027">
    <property type="taxonomic scope" value="Eukaryota"/>
</dbReference>
<dbReference type="HOGENOM" id="CLU_157356_0_0_1"/>
<dbReference type="InParanoid" id="Q9I8V0"/>
<dbReference type="OMA" id="HWISTVL"/>
<dbReference type="OrthoDB" id="26525at2759"/>
<dbReference type="PhylomeDB" id="Q9I8V0"/>
<dbReference type="TreeFam" id="TF332342"/>
<dbReference type="PRO" id="PR:Q9I8V0"/>
<dbReference type="Proteomes" id="UP000000437">
    <property type="component" value="Alternate scaffold 12"/>
</dbReference>
<dbReference type="Proteomes" id="UP000000437">
    <property type="component" value="Chromosome 12"/>
</dbReference>
<dbReference type="Bgee" id="ENSDARG00000002768">
    <property type="expression patterns" value="Expressed in larva and 20 other cell types or tissues"/>
</dbReference>
<dbReference type="GO" id="GO:0005737">
    <property type="term" value="C:cytoplasm"/>
    <property type="evidence" value="ECO:0000318"/>
    <property type="project" value="GO_Central"/>
</dbReference>
<dbReference type="GO" id="GO:0005509">
    <property type="term" value="F:calcium ion binding"/>
    <property type="evidence" value="ECO:0000318"/>
    <property type="project" value="GO_Central"/>
</dbReference>
<dbReference type="CDD" id="cd16255">
    <property type="entry name" value="EFh_parvalbumin_beta"/>
    <property type="match status" value="1"/>
</dbReference>
<dbReference type="FunFam" id="1.10.238.10:FF:000060">
    <property type="entry name" value="Parvalbumin, thymic"/>
    <property type="match status" value="1"/>
</dbReference>
<dbReference type="Gene3D" id="1.10.238.10">
    <property type="entry name" value="EF-hand"/>
    <property type="match status" value="1"/>
</dbReference>
<dbReference type="InterPro" id="IPR011992">
    <property type="entry name" value="EF-hand-dom_pair"/>
</dbReference>
<dbReference type="InterPro" id="IPR018247">
    <property type="entry name" value="EF_Hand_1_Ca_BS"/>
</dbReference>
<dbReference type="InterPro" id="IPR002048">
    <property type="entry name" value="EF_hand_dom"/>
</dbReference>
<dbReference type="InterPro" id="IPR008080">
    <property type="entry name" value="Parvalbumin"/>
</dbReference>
<dbReference type="PANTHER" id="PTHR11653:SF12">
    <property type="entry name" value="PARVALBUMIN"/>
    <property type="match status" value="1"/>
</dbReference>
<dbReference type="PANTHER" id="PTHR11653">
    <property type="entry name" value="PARVALBUMIN ALPHA"/>
    <property type="match status" value="1"/>
</dbReference>
<dbReference type="Pfam" id="PF13499">
    <property type="entry name" value="EF-hand_7"/>
    <property type="match status" value="1"/>
</dbReference>
<dbReference type="PRINTS" id="PR01697">
    <property type="entry name" value="PARVALBUMIN"/>
</dbReference>
<dbReference type="SMART" id="SM00054">
    <property type="entry name" value="EFh"/>
    <property type="match status" value="2"/>
</dbReference>
<dbReference type="SUPFAM" id="SSF47473">
    <property type="entry name" value="EF-hand"/>
    <property type="match status" value="1"/>
</dbReference>
<dbReference type="PROSITE" id="PS00018">
    <property type="entry name" value="EF_HAND_1"/>
    <property type="match status" value="2"/>
</dbReference>
<dbReference type="PROSITE" id="PS50222">
    <property type="entry name" value="EF_HAND_2"/>
    <property type="match status" value="2"/>
</dbReference>
<sequence length="109" mass="11622">MAFAGILKDEDVAAALKDCAAADSFNYKNFFAKVGLSAKSPDDIKKAFFVIDQDKSGFIEEDELKLFLQNFSAGARALTDAETKAFLSAGDSDGDGKIGVDEFALLVKA</sequence>
<feature type="initiator methionine" description="Removed" evidence="1">
    <location>
        <position position="1"/>
    </location>
</feature>
<feature type="chain" id="PRO_0000073605" description="Parvalbumin-2">
    <location>
        <begin position="2"/>
        <end position="109"/>
    </location>
</feature>
<feature type="domain" description="EF-hand 1" evidence="3">
    <location>
        <begin position="39"/>
        <end position="74"/>
    </location>
</feature>
<feature type="domain" description="EF-hand 2" evidence="3">
    <location>
        <begin position="78"/>
        <end position="109"/>
    </location>
</feature>
<feature type="binding site" evidence="3">
    <location>
        <position position="52"/>
    </location>
    <ligand>
        <name>Ca(2+)</name>
        <dbReference type="ChEBI" id="CHEBI:29108"/>
        <label>1</label>
    </ligand>
</feature>
<feature type="binding site" evidence="3">
    <location>
        <position position="54"/>
    </location>
    <ligand>
        <name>Ca(2+)</name>
        <dbReference type="ChEBI" id="CHEBI:29108"/>
        <label>1</label>
    </ligand>
</feature>
<feature type="binding site" evidence="3">
    <location>
        <position position="56"/>
    </location>
    <ligand>
        <name>Ca(2+)</name>
        <dbReference type="ChEBI" id="CHEBI:29108"/>
        <label>1</label>
    </ligand>
</feature>
<feature type="binding site" evidence="2">
    <location>
        <position position="58"/>
    </location>
    <ligand>
        <name>Ca(2+)</name>
        <dbReference type="ChEBI" id="CHEBI:29108"/>
        <label>1</label>
    </ligand>
</feature>
<feature type="binding site" evidence="2">
    <location>
        <position position="60"/>
    </location>
    <ligand>
        <name>Ca(2+)</name>
        <dbReference type="ChEBI" id="CHEBI:29108"/>
        <label>1</label>
    </ligand>
</feature>
<feature type="binding site" evidence="3">
    <location>
        <position position="63"/>
    </location>
    <ligand>
        <name>Ca(2+)</name>
        <dbReference type="ChEBI" id="CHEBI:29108"/>
        <label>1</label>
    </ligand>
</feature>
<feature type="binding site" evidence="3">
    <location>
        <position position="91"/>
    </location>
    <ligand>
        <name>Ca(2+)</name>
        <dbReference type="ChEBI" id="CHEBI:29108"/>
        <label>2</label>
    </ligand>
</feature>
<feature type="binding site" evidence="3">
    <location>
        <position position="93"/>
    </location>
    <ligand>
        <name>Ca(2+)</name>
        <dbReference type="ChEBI" id="CHEBI:29108"/>
        <label>2</label>
    </ligand>
</feature>
<feature type="binding site" evidence="3">
    <location>
        <position position="95"/>
    </location>
    <ligand>
        <name>Ca(2+)</name>
        <dbReference type="ChEBI" id="CHEBI:29108"/>
        <label>2</label>
    </ligand>
</feature>
<feature type="binding site" evidence="3">
    <location>
        <position position="97"/>
    </location>
    <ligand>
        <name>Ca(2+)</name>
        <dbReference type="ChEBI" id="CHEBI:29108"/>
        <label>2</label>
    </ligand>
</feature>
<feature type="binding site" evidence="3">
    <location>
        <position position="102"/>
    </location>
    <ligand>
        <name>Ca(2+)</name>
        <dbReference type="ChEBI" id="CHEBI:29108"/>
        <label>2</label>
    </ligand>
</feature>
<reference key="1">
    <citation type="journal article" date="2000" name="Dev. Dyn.">
        <title>Asynchronous activation of 10 muscle-specific protein (MSP) genes during zebrafish somitogenesis.</title>
        <authorList>
            <person name="Xu Y."/>
            <person name="He J."/>
            <person name="Wang X."/>
            <person name="Lim T.M."/>
            <person name="Gong Z."/>
        </authorList>
    </citation>
    <scope>NUCLEOTIDE SEQUENCE [MRNA]</scope>
</reference>
<reference key="2">
    <citation type="submission" date="2005-04" db="EMBL/GenBank/DDBJ databases">
        <authorList>
            <consortium name="NIH - Zebrafish Gene Collection (ZGC) project"/>
        </authorList>
    </citation>
    <scope>NUCLEOTIDE SEQUENCE [LARGE SCALE MRNA]</scope>
    <source>
        <tissue>Larva</tissue>
    </source>
</reference>
<evidence type="ECO:0000250" key="1"/>
<evidence type="ECO:0000250" key="2">
    <source>
        <dbReference type="UniProtKB" id="P02621"/>
    </source>
</evidence>
<evidence type="ECO:0000255" key="3">
    <source>
        <dbReference type="PROSITE-ProRule" id="PRU00448"/>
    </source>
</evidence>
<evidence type="ECO:0000305" key="4"/>
<gene>
    <name type="primary">pvalb2</name>
    <name type="synonym">pvalb</name>
    <name type="synonym">pvalbl</name>
</gene>
<accession>Q9I8V0</accession>
<accession>Q567L1</accession>
<organism>
    <name type="scientific">Danio rerio</name>
    <name type="common">Zebrafish</name>
    <name type="synonym">Brachydanio rerio</name>
    <dbReference type="NCBI Taxonomy" id="7955"/>
    <lineage>
        <taxon>Eukaryota</taxon>
        <taxon>Metazoa</taxon>
        <taxon>Chordata</taxon>
        <taxon>Craniata</taxon>
        <taxon>Vertebrata</taxon>
        <taxon>Euteleostomi</taxon>
        <taxon>Actinopterygii</taxon>
        <taxon>Neopterygii</taxon>
        <taxon>Teleostei</taxon>
        <taxon>Ostariophysi</taxon>
        <taxon>Cypriniformes</taxon>
        <taxon>Danionidae</taxon>
        <taxon>Danioninae</taxon>
        <taxon>Danio</taxon>
    </lineage>
</organism>
<keyword id="KW-0106">Calcium</keyword>
<keyword id="KW-0479">Metal-binding</keyword>
<keyword id="KW-0514">Muscle protein</keyword>
<keyword id="KW-1185">Reference proteome</keyword>
<keyword id="KW-0677">Repeat</keyword>
<name>PRV2_DANRE</name>
<protein>
    <recommendedName>
        <fullName>Parvalbumin-2</fullName>
    </recommendedName>
    <alternativeName>
        <fullName>Parvalbumin beta</fullName>
    </alternativeName>
</protein>